<gene>
    <name evidence="1" type="primary">creN7</name>
    <name type="ordered locus">APE_0450a</name>
    <name type="ORF">APES019</name>
</gene>
<protein>
    <recommendedName>
        <fullName evidence="1">Chromatin protein Cren7</fullName>
    </recommendedName>
</protein>
<proteinExistence type="inferred from homology"/>
<feature type="chain" id="PRO_0000345165" description="Chromatin protein Cren7">
    <location>
        <begin position="1"/>
        <end position="64"/>
    </location>
</feature>
<sequence>MSQKQLPPVKVRDPTTGKEVELTPIKVWKLSPRGRRGVKIGLFKSPETGKYFRAKVPDDYPETG</sequence>
<dbReference type="EMBL" id="BA000002">
    <property type="protein sequence ID" value="BAA79414.1"/>
    <property type="molecule type" value="Genomic_DNA"/>
</dbReference>
<dbReference type="PIR" id="B72740">
    <property type="entry name" value="B72740"/>
</dbReference>
<dbReference type="RefSeq" id="WP_010865756.1">
    <property type="nucleotide sequence ID" value="NC_000854.2"/>
</dbReference>
<dbReference type="SMR" id="Q9YEY2"/>
<dbReference type="STRING" id="272557.APE_0450a"/>
<dbReference type="EnsemblBacteria" id="BAA79414">
    <property type="protein sequence ID" value="BAA79414"/>
    <property type="gene ID" value="APE_0450a"/>
</dbReference>
<dbReference type="GeneID" id="1444638"/>
<dbReference type="KEGG" id="ape:APE_0450a"/>
<dbReference type="eggNOG" id="arCOG04114">
    <property type="taxonomic scope" value="Archaea"/>
</dbReference>
<dbReference type="Proteomes" id="UP000002518">
    <property type="component" value="Chromosome"/>
</dbReference>
<dbReference type="GO" id="GO:0005694">
    <property type="term" value="C:chromosome"/>
    <property type="evidence" value="ECO:0007669"/>
    <property type="project" value="UniProtKB-SubCell"/>
</dbReference>
<dbReference type="GO" id="GO:0005737">
    <property type="term" value="C:cytoplasm"/>
    <property type="evidence" value="ECO:0007669"/>
    <property type="project" value="UniProtKB-SubCell"/>
</dbReference>
<dbReference type="GO" id="GO:0003690">
    <property type="term" value="F:double-stranded DNA binding"/>
    <property type="evidence" value="ECO:0007669"/>
    <property type="project" value="UniProtKB-UniRule"/>
</dbReference>
<dbReference type="Gene3D" id="2.30.30.610">
    <property type="entry name" value="Chromatin protein Cren7"/>
    <property type="match status" value="1"/>
</dbReference>
<dbReference type="HAMAP" id="MF_01387">
    <property type="entry name" value="Chromatin_Cren7"/>
    <property type="match status" value="1"/>
</dbReference>
<dbReference type="InterPro" id="IPR038647">
    <property type="entry name" value="Cren7_sf"/>
</dbReference>
<dbReference type="InterPro" id="IPR020906">
    <property type="entry name" value="dsDNA-bd_Cren7"/>
</dbReference>
<dbReference type="Pfam" id="PF11520">
    <property type="entry name" value="Cren7"/>
    <property type="match status" value="1"/>
</dbReference>
<keyword id="KW-0158">Chromosome</keyword>
<keyword id="KW-0963">Cytoplasm</keyword>
<keyword id="KW-0238">DNA-binding</keyword>
<keyword id="KW-0488">Methylation</keyword>
<keyword id="KW-1185">Reference proteome</keyword>
<organism>
    <name type="scientific">Aeropyrum pernix (strain ATCC 700893 / DSM 11879 / JCM 9820 / NBRC 100138 / K1)</name>
    <dbReference type="NCBI Taxonomy" id="272557"/>
    <lineage>
        <taxon>Archaea</taxon>
        <taxon>Thermoproteota</taxon>
        <taxon>Thermoprotei</taxon>
        <taxon>Desulfurococcales</taxon>
        <taxon>Desulfurococcaceae</taxon>
        <taxon>Aeropyrum</taxon>
    </lineage>
</organism>
<evidence type="ECO:0000255" key="1">
    <source>
        <dbReference type="HAMAP-Rule" id="MF_01387"/>
    </source>
</evidence>
<accession>Q9YEY2</accession>
<reference key="1">
    <citation type="journal article" date="1999" name="DNA Res.">
        <title>Complete genome sequence of an aerobic hyper-thermophilic crenarchaeon, Aeropyrum pernix K1.</title>
        <authorList>
            <person name="Kawarabayasi Y."/>
            <person name="Hino Y."/>
            <person name="Horikawa H."/>
            <person name="Yamazaki S."/>
            <person name="Haikawa Y."/>
            <person name="Jin-no K."/>
            <person name="Takahashi M."/>
            <person name="Sekine M."/>
            <person name="Baba S."/>
            <person name="Ankai A."/>
            <person name="Kosugi H."/>
            <person name="Hosoyama A."/>
            <person name="Fukui S."/>
            <person name="Nagai Y."/>
            <person name="Nishijima K."/>
            <person name="Nakazawa H."/>
            <person name="Takamiya M."/>
            <person name="Masuda S."/>
            <person name="Funahashi T."/>
            <person name="Tanaka T."/>
            <person name="Kudoh Y."/>
            <person name="Yamazaki J."/>
            <person name="Kushida N."/>
            <person name="Oguchi A."/>
            <person name="Aoki K."/>
            <person name="Kubota K."/>
            <person name="Nakamura Y."/>
            <person name="Nomura N."/>
            <person name="Sako Y."/>
            <person name="Kikuchi H."/>
        </authorList>
    </citation>
    <scope>NUCLEOTIDE SEQUENCE [LARGE SCALE GENOMIC DNA]</scope>
    <source>
        <strain>ATCC 700893 / DSM 11879 / JCM 9820 / NBRC 100138 / K1</strain>
    </source>
</reference>
<comment type="function">
    <text evidence="1">A chromatin protein, binds double-stranded DNA without sequence specificity. Constrains negative DNA supercoils.</text>
</comment>
<comment type="subunit">
    <text evidence="1">Monomer.</text>
</comment>
<comment type="subcellular location">
    <subcellularLocation>
        <location evidence="1">Chromosome</location>
    </subcellularLocation>
    <subcellularLocation>
        <location evidence="1">Cytoplasm</location>
    </subcellularLocation>
</comment>
<comment type="PTM">
    <text evidence="1">Methylated at multiple sites, to varying extents.</text>
</comment>
<comment type="similarity">
    <text evidence="1">Belongs to the Cren7 family.</text>
</comment>
<name>CREN7_AERPE</name>